<comment type="subunit">
    <text evidence="1">Part of the 50S ribosomal subunit. Contacts protein L32.</text>
</comment>
<comment type="similarity">
    <text evidence="1">Belongs to the bacterial ribosomal protein bL17 family.</text>
</comment>
<evidence type="ECO:0000255" key="1">
    <source>
        <dbReference type="HAMAP-Rule" id="MF_01368"/>
    </source>
</evidence>
<evidence type="ECO:0000305" key="2"/>
<gene>
    <name evidence="1" type="primary">rplQ</name>
    <name type="ordered locus">Sputw3181_0182</name>
</gene>
<dbReference type="EMBL" id="CP000503">
    <property type="protein sequence ID" value="ABM23035.1"/>
    <property type="molecule type" value="Genomic_DNA"/>
</dbReference>
<dbReference type="RefSeq" id="WP_007644470.1">
    <property type="nucleotide sequence ID" value="NC_008750.1"/>
</dbReference>
<dbReference type="SMR" id="A1REE0"/>
<dbReference type="GeneID" id="75190592"/>
<dbReference type="KEGG" id="shw:Sputw3181_0182"/>
<dbReference type="HOGENOM" id="CLU_074407_2_0_6"/>
<dbReference type="Proteomes" id="UP000002597">
    <property type="component" value="Chromosome"/>
</dbReference>
<dbReference type="GO" id="GO:0022625">
    <property type="term" value="C:cytosolic large ribosomal subunit"/>
    <property type="evidence" value="ECO:0007669"/>
    <property type="project" value="TreeGrafter"/>
</dbReference>
<dbReference type="GO" id="GO:0003735">
    <property type="term" value="F:structural constituent of ribosome"/>
    <property type="evidence" value="ECO:0007669"/>
    <property type="project" value="InterPro"/>
</dbReference>
<dbReference type="GO" id="GO:0006412">
    <property type="term" value="P:translation"/>
    <property type="evidence" value="ECO:0007669"/>
    <property type="project" value="UniProtKB-UniRule"/>
</dbReference>
<dbReference type="FunFam" id="3.90.1030.10:FF:000001">
    <property type="entry name" value="50S ribosomal protein L17"/>
    <property type="match status" value="1"/>
</dbReference>
<dbReference type="Gene3D" id="3.90.1030.10">
    <property type="entry name" value="Ribosomal protein L17"/>
    <property type="match status" value="1"/>
</dbReference>
<dbReference type="HAMAP" id="MF_01368">
    <property type="entry name" value="Ribosomal_bL17"/>
    <property type="match status" value="1"/>
</dbReference>
<dbReference type="InterPro" id="IPR000456">
    <property type="entry name" value="Ribosomal_bL17"/>
</dbReference>
<dbReference type="InterPro" id="IPR047859">
    <property type="entry name" value="Ribosomal_bL17_CS"/>
</dbReference>
<dbReference type="InterPro" id="IPR036373">
    <property type="entry name" value="Ribosomal_bL17_sf"/>
</dbReference>
<dbReference type="NCBIfam" id="TIGR00059">
    <property type="entry name" value="L17"/>
    <property type="match status" value="1"/>
</dbReference>
<dbReference type="PANTHER" id="PTHR14413:SF16">
    <property type="entry name" value="LARGE RIBOSOMAL SUBUNIT PROTEIN BL17M"/>
    <property type="match status" value="1"/>
</dbReference>
<dbReference type="PANTHER" id="PTHR14413">
    <property type="entry name" value="RIBOSOMAL PROTEIN L17"/>
    <property type="match status" value="1"/>
</dbReference>
<dbReference type="Pfam" id="PF01196">
    <property type="entry name" value="Ribosomal_L17"/>
    <property type="match status" value="1"/>
</dbReference>
<dbReference type="SUPFAM" id="SSF64263">
    <property type="entry name" value="Prokaryotic ribosomal protein L17"/>
    <property type="match status" value="1"/>
</dbReference>
<dbReference type="PROSITE" id="PS01167">
    <property type="entry name" value="RIBOSOMAL_L17"/>
    <property type="match status" value="1"/>
</dbReference>
<feature type="chain" id="PRO_1000055944" description="Large ribosomal subunit protein bL17">
    <location>
        <begin position="1"/>
        <end position="131"/>
    </location>
</feature>
<protein>
    <recommendedName>
        <fullName evidence="1">Large ribosomal subunit protein bL17</fullName>
    </recommendedName>
    <alternativeName>
        <fullName evidence="2">50S ribosomal protein L17</fullName>
    </alternativeName>
</protein>
<reference key="1">
    <citation type="submission" date="2006-12" db="EMBL/GenBank/DDBJ databases">
        <title>Complete sequence of Shewanella sp. W3-18-1.</title>
        <authorList>
            <consortium name="US DOE Joint Genome Institute"/>
            <person name="Copeland A."/>
            <person name="Lucas S."/>
            <person name="Lapidus A."/>
            <person name="Barry K."/>
            <person name="Detter J.C."/>
            <person name="Glavina del Rio T."/>
            <person name="Hammon N."/>
            <person name="Israni S."/>
            <person name="Dalin E."/>
            <person name="Tice H."/>
            <person name="Pitluck S."/>
            <person name="Chain P."/>
            <person name="Malfatti S."/>
            <person name="Shin M."/>
            <person name="Vergez L."/>
            <person name="Schmutz J."/>
            <person name="Larimer F."/>
            <person name="Land M."/>
            <person name="Hauser L."/>
            <person name="Kyrpides N."/>
            <person name="Lykidis A."/>
            <person name="Tiedje J."/>
            <person name="Richardson P."/>
        </authorList>
    </citation>
    <scope>NUCLEOTIDE SEQUENCE [LARGE SCALE GENOMIC DNA]</scope>
    <source>
        <strain>W3-18-1</strain>
    </source>
</reference>
<proteinExistence type="inferred from homology"/>
<name>RL17_SHESW</name>
<accession>A1REE0</accession>
<keyword id="KW-0687">Ribonucleoprotein</keyword>
<keyword id="KW-0689">Ribosomal protein</keyword>
<sequence>MRHRKSGRQLNRNSSHRQAMFRNMASSLVRHEIIKTTVAKAKELRRVVEPLITLAKSDSVANRRLAFARTRDAEVVGKLFTELGPRYQERPGGYTRILKCGLRAGDKAPMAYIELVGRPEAAQAVDVEAAE</sequence>
<organism>
    <name type="scientific">Shewanella sp. (strain W3-18-1)</name>
    <dbReference type="NCBI Taxonomy" id="351745"/>
    <lineage>
        <taxon>Bacteria</taxon>
        <taxon>Pseudomonadati</taxon>
        <taxon>Pseudomonadota</taxon>
        <taxon>Gammaproteobacteria</taxon>
        <taxon>Alteromonadales</taxon>
        <taxon>Shewanellaceae</taxon>
        <taxon>Shewanella</taxon>
    </lineage>
</organism>